<dbReference type="EMBL" id="AE009439">
    <property type="protein sequence ID" value="AAM02659.1"/>
    <property type="molecule type" value="Genomic_DNA"/>
</dbReference>
<dbReference type="RefSeq" id="WP_011019814.1">
    <property type="nucleotide sequence ID" value="NC_003551.1"/>
</dbReference>
<dbReference type="SMR" id="Q8TVE6"/>
<dbReference type="FunCoup" id="Q8TVE6">
    <property type="interactions" value="125"/>
</dbReference>
<dbReference type="STRING" id="190192.MK1446"/>
<dbReference type="PaxDb" id="190192-MK1446"/>
<dbReference type="EnsemblBacteria" id="AAM02659">
    <property type="protein sequence ID" value="AAM02659"/>
    <property type="gene ID" value="MK1446"/>
</dbReference>
<dbReference type="GeneID" id="1478041"/>
<dbReference type="KEGG" id="mka:MK1446"/>
<dbReference type="PATRIC" id="fig|190192.8.peg.1602"/>
<dbReference type="HOGENOM" id="CLU_109671_1_1_2"/>
<dbReference type="InParanoid" id="Q8TVE6"/>
<dbReference type="OrthoDB" id="7793at2157"/>
<dbReference type="Proteomes" id="UP000001826">
    <property type="component" value="Chromosome"/>
</dbReference>
<dbReference type="GO" id="GO:1990904">
    <property type="term" value="C:ribonucleoprotein complex"/>
    <property type="evidence" value="ECO:0007669"/>
    <property type="project" value="UniProtKB-KW"/>
</dbReference>
<dbReference type="GO" id="GO:0005840">
    <property type="term" value="C:ribosome"/>
    <property type="evidence" value="ECO:0007669"/>
    <property type="project" value="UniProtKB-KW"/>
</dbReference>
<dbReference type="GO" id="GO:0003735">
    <property type="term" value="F:structural constituent of ribosome"/>
    <property type="evidence" value="ECO:0007669"/>
    <property type="project" value="InterPro"/>
</dbReference>
<dbReference type="GO" id="GO:0006412">
    <property type="term" value="P:translation"/>
    <property type="evidence" value="ECO:0007669"/>
    <property type="project" value="UniProtKB-UniRule"/>
</dbReference>
<dbReference type="HAMAP" id="MF_00512">
    <property type="entry name" value="Ribosomal_eS6"/>
    <property type="match status" value="1"/>
</dbReference>
<dbReference type="InterPro" id="IPR001377">
    <property type="entry name" value="Ribosomal_eS6"/>
</dbReference>
<dbReference type="InterPro" id="IPR020924">
    <property type="entry name" value="Ribosomal_eS6_arc"/>
</dbReference>
<dbReference type="InterPro" id="IPR018282">
    <property type="entry name" value="Ribosomal_eS6_CS"/>
</dbReference>
<dbReference type="NCBIfam" id="NF003294">
    <property type="entry name" value="PRK04290.1-3"/>
    <property type="match status" value="1"/>
</dbReference>
<dbReference type="PANTHER" id="PTHR11502">
    <property type="entry name" value="40S RIBOSOMAL PROTEIN S6"/>
    <property type="match status" value="1"/>
</dbReference>
<dbReference type="Pfam" id="PF01092">
    <property type="entry name" value="Ribosomal_S6e"/>
    <property type="match status" value="1"/>
</dbReference>
<dbReference type="SMART" id="SM01405">
    <property type="entry name" value="Ribosomal_S6e"/>
    <property type="match status" value="1"/>
</dbReference>
<dbReference type="PROSITE" id="PS00578">
    <property type="entry name" value="RIBOSOMAL_S6E"/>
    <property type="match status" value="1"/>
</dbReference>
<sequence length="130" mass="14322">MPEFKVVVADPEKARSYQVEVKGEDAEKLIGKRIGDVIDGEIVGLPGYKLKITGGTDKDGFPMRPDIHGPVRVRLLLSGPPGFRPERKGERRRKTVRGNTISEDIVQVNTVIVEYGDKPVEELLGEGGEE</sequence>
<comment type="similarity">
    <text evidence="1">Belongs to the eukaryotic ribosomal protein eS6 family.</text>
</comment>
<protein>
    <recommendedName>
        <fullName evidence="1">Small ribosomal subunit protein eS6</fullName>
    </recommendedName>
    <alternativeName>
        <fullName evidence="3">30S ribosomal protein S6e</fullName>
    </alternativeName>
</protein>
<gene>
    <name evidence="1" type="primary">rps6e</name>
    <name type="ordered locus">MK1446</name>
</gene>
<feature type="chain" id="PRO_0000137349" description="Small ribosomal subunit protein eS6">
    <location>
        <begin position="1"/>
        <end position="130"/>
    </location>
</feature>
<feature type="region of interest" description="Disordered" evidence="2">
    <location>
        <begin position="78"/>
        <end position="98"/>
    </location>
</feature>
<reference key="1">
    <citation type="journal article" date="2002" name="Proc. Natl. Acad. Sci. U.S.A.">
        <title>The complete genome of hyperthermophile Methanopyrus kandleri AV19 and monophyly of archaeal methanogens.</title>
        <authorList>
            <person name="Slesarev A.I."/>
            <person name="Mezhevaya K.V."/>
            <person name="Makarova K.S."/>
            <person name="Polushin N.N."/>
            <person name="Shcherbinina O.V."/>
            <person name="Shakhova V.V."/>
            <person name="Belova G.I."/>
            <person name="Aravind L."/>
            <person name="Natale D.A."/>
            <person name="Rogozin I.B."/>
            <person name="Tatusov R.L."/>
            <person name="Wolf Y.I."/>
            <person name="Stetter K.O."/>
            <person name="Malykh A.G."/>
            <person name="Koonin E.V."/>
            <person name="Kozyavkin S.A."/>
        </authorList>
    </citation>
    <scope>NUCLEOTIDE SEQUENCE [LARGE SCALE GENOMIC DNA]</scope>
    <source>
        <strain>AV19 / DSM 6324 / JCM 9639 / NBRC 100938</strain>
    </source>
</reference>
<evidence type="ECO:0000255" key="1">
    <source>
        <dbReference type="HAMAP-Rule" id="MF_00512"/>
    </source>
</evidence>
<evidence type="ECO:0000256" key="2">
    <source>
        <dbReference type="SAM" id="MobiDB-lite"/>
    </source>
</evidence>
<evidence type="ECO:0000305" key="3"/>
<name>RS6E_METKA</name>
<accession>Q8TVE6</accession>
<organism>
    <name type="scientific">Methanopyrus kandleri (strain AV19 / DSM 6324 / JCM 9639 / NBRC 100938)</name>
    <dbReference type="NCBI Taxonomy" id="190192"/>
    <lineage>
        <taxon>Archaea</taxon>
        <taxon>Methanobacteriati</taxon>
        <taxon>Methanobacteriota</taxon>
        <taxon>Methanomada group</taxon>
        <taxon>Methanopyri</taxon>
        <taxon>Methanopyrales</taxon>
        <taxon>Methanopyraceae</taxon>
        <taxon>Methanopyrus</taxon>
    </lineage>
</organism>
<proteinExistence type="inferred from homology"/>
<keyword id="KW-1185">Reference proteome</keyword>
<keyword id="KW-0687">Ribonucleoprotein</keyword>
<keyword id="KW-0689">Ribosomal protein</keyword>